<reference key="1">
    <citation type="journal article" date="2001" name="Proc. Natl. Acad. Sci. U.S.A.">
        <title>The complete genome of the crenarchaeon Sulfolobus solfataricus P2.</title>
        <authorList>
            <person name="She Q."/>
            <person name="Singh R.K."/>
            <person name="Confalonieri F."/>
            <person name="Zivanovic Y."/>
            <person name="Allard G."/>
            <person name="Awayez M.J."/>
            <person name="Chan-Weiher C.C.-Y."/>
            <person name="Clausen I.G."/>
            <person name="Curtis B.A."/>
            <person name="De Moors A."/>
            <person name="Erauso G."/>
            <person name="Fletcher C."/>
            <person name="Gordon P.M.K."/>
            <person name="Heikamp-de Jong I."/>
            <person name="Jeffries A.C."/>
            <person name="Kozera C.J."/>
            <person name="Medina N."/>
            <person name="Peng X."/>
            <person name="Thi-Ngoc H.P."/>
            <person name="Redder P."/>
            <person name="Schenk M.E."/>
            <person name="Theriault C."/>
            <person name="Tolstrup N."/>
            <person name="Charlebois R.L."/>
            <person name="Doolittle W.F."/>
            <person name="Duguet M."/>
            <person name="Gaasterland T."/>
            <person name="Garrett R.A."/>
            <person name="Ragan M.A."/>
            <person name="Sensen C.W."/>
            <person name="Van der Oost J."/>
        </authorList>
    </citation>
    <scope>NUCLEOTIDE SEQUENCE [LARGE SCALE GENOMIC DNA]</scope>
    <source>
        <strain>ATCC 35092 / DSM 1617 / JCM 11322 / P2</strain>
    </source>
</reference>
<feature type="chain" id="PRO_0000151401" description="Putative ketol-acid reductoisomerase 2">
    <location>
        <begin position="1"/>
        <end position="333"/>
    </location>
</feature>
<feature type="domain" description="KARI N-terminal Rossmann" evidence="1">
    <location>
        <begin position="1"/>
        <end position="182"/>
    </location>
</feature>
<feature type="domain" description="KARI C-terminal knotted" evidence="2">
    <location>
        <begin position="183"/>
        <end position="329"/>
    </location>
</feature>
<feature type="strand" evidence="6">
    <location>
        <begin position="4"/>
        <end position="6"/>
    </location>
</feature>
<feature type="turn" evidence="8">
    <location>
        <begin position="12"/>
        <end position="15"/>
    </location>
</feature>
<feature type="strand" evidence="8">
    <location>
        <begin position="16"/>
        <end position="21"/>
    </location>
</feature>
<feature type="helix" evidence="8">
    <location>
        <begin position="26"/>
        <end position="35"/>
    </location>
</feature>
<feature type="turn" evidence="4">
    <location>
        <begin position="36"/>
        <end position="38"/>
    </location>
</feature>
<feature type="strand" evidence="8">
    <location>
        <begin position="40"/>
        <end position="44"/>
    </location>
</feature>
<feature type="helix" evidence="8">
    <location>
        <begin position="49"/>
        <end position="56"/>
    </location>
</feature>
<feature type="strand" evidence="5">
    <location>
        <begin position="60"/>
        <end position="62"/>
    </location>
</feature>
<feature type="helix" evidence="8">
    <location>
        <begin position="64"/>
        <end position="70"/>
    </location>
</feature>
<feature type="strand" evidence="8">
    <location>
        <begin position="72"/>
        <end position="76"/>
    </location>
</feature>
<feature type="strand" evidence="8">
    <location>
        <begin position="80"/>
        <end position="82"/>
    </location>
</feature>
<feature type="helix" evidence="8">
    <location>
        <begin position="83"/>
        <end position="90"/>
    </location>
</feature>
<feature type="helix" evidence="8">
    <location>
        <begin position="92"/>
        <end position="96"/>
    </location>
</feature>
<feature type="strand" evidence="8">
    <location>
        <begin position="99"/>
        <end position="106"/>
    </location>
</feature>
<feature type="helix" evidence="8">
    <location>
        <begin position="109"/>
        <end position="112"/>
    </location>
</feature>
<feature type="strand" evidence="8">
    <location>
        <begin position="122"/>
        <end position="131"/>
    </location>
</feature>
<feature type="helix" evidence="8">
    <location>
        <begin position="134"/>
        <end position="140"/>
    </location>
</feature>
<feature type="turn" evidence="8">
    <location>
        <begin position="141"/>
        <end position="143"/>
    </location>
</feature>
<feature type="strand" evidence="8">
    <location>
        <begin position="148"/>
        <end position="154"/>
    </location>
</feature>
<feature type="strand" evidence="8">
    <location>
        <begin position="156"/>
        <end position="158"/>
    </location>
</feature>
<feature type="helix" evidence="8">
    <location>
        <begin position="160"/>
        <end position="170"/>
    </location>
</feature>
<feature type="turn" evidence="8">
    <location>
        <begin position="174"/>
        <end position="176"/>
    </location>
</feature>
<feature type="strand" evidence="8">
    <location>
        <begin position="179"/>
        <end position="181"/>
    </location>
</feature>
<feature type="helix" evidence="8">
    <location>
        <begin position="184"/>
        <end position="196"/>
    </location>
</feature>
<feature type="helix" evidence="8">
    <location>
        <begin position="198"/>
        <end position="217"/>
    </location>
</feature>
<feature type="helix" evidence="8">
    <location>
        <begin position="221"/>
        <end position="228"/>
    </location>
</feature>
<feature type="strand" evidence="7">
    <location>
        <begin position="230"/>
        <end position="232"/>
    </location>
</feature>
<feature type="helix" evidence="8">
    <location>
        <begin position="233"/>
        <end position="244"/>
    </location>
</feature>
<feature type="helix" evidence="8">
    <location>
        <begin position="248"/>
        <end position="252"/>
    </location>
</feature>
<feature type="helix" evidence="8">
    <location>
        <begin position="255"/>
        <end position="284"/>
    </location>
</feature>
<feature type="helix" evidence="8">
    <location>
        <begin position="287"/>
        <end position="298"/>
    </location>
</feature>
<feature type="helix" evidence="8">
    <location>
        <begin position="301"/>
        <end position="311"/>
    </location>
</feature>
<feature type="helix" evidence="8">
    <location>
        <begin position="314"/>
        <end position="325"/>
    </location>
</feature>
<gene>
    <name type="primary">ilvC2</name>
    <name type="synonym">ilvC-2</name>
    <name type="ordered locus">SSO1322</name>
</gene>
<comment type="catalytic activity">
    <reaction>
        <text>(2R)-2,3-dihydroxy-3-methylbutanoate + NADP(+) = (2S)-2-acetolactate + NADPH + H(+)</text>
        <dbReference type="Rhea" id="RHEA:22068"/>
        <dbReference type="ChEBI" id="CHEBI:15378"/>
        <dbReference type="ChEBI" id="CHEBI:49072"/>
        <dbReference type="ChEBI" id="CHEBI:57783"/>
        <dbReference type="ChEBI" id="CHEBI:58349"/>
        <dbReference type="ChEBI" id="CHEBI:58476"/>
        <dbReference type="EC" id="1.1.1.86"/>
    </reaction>
</comment>
<comment type="catalytic activity">
    <reaction>
        <text>(2R,3R)-2,3-dihydroxy-3-methylpentanoate + NADP(+) = (S)-2-ethyl-2-hydroxy-3-oxobutanoate + NADPH + H(+)</text>
        <dbReference type="Rhea" id="RHEA:13493"/>
        <dbReference type="ChEBI" id="CHEBI:15378"/>
        <dbReference type="ChEBI" id="CHEBI:49256"/>
        <dbReference type="ChEBI" id="CHEBI:49258"/>
        <dbReference type="ChEBI" id="CHEBI:57783"/>
        <dbReference type="ChEBI" id="CHEBI:58349"/>
        <dbReference type="EC" id="1.1.1.86"/>
    </reaction>
</comment>
<comment type="pathway">
    <text>Amino-acid biosynthesis; L-isoleucine biosynthesis; L-isoleucine from 2-oxobutanoate: step 2/4.</text>
</comment>
<comment type="pathway">
    <text>Amino-acid biosynthesis; L-valine biosynthesis; L-valine from pyruvate: step 2/4.</text>
</comment>
<comment type="similarity">
    <text evidence="3">Belongs to the ketol-acid reductoisomerase family.</text>
</comment>
<comment type="caution">
    <text evidence="3">Ser-107 is present instead of the conserved His which is expected to be an active site residue.</text>
</comment>
<evidence type="ECO:0000255" key="1">
    <source>
        <dbReference type="PROSITE-ProRule" id="PRU01197"/>
    </source>
</evidence>
<evidence type="ECO:0000255" key="2">
    <source>
        <dbReference type="PROSITE-ProRule" id="PRU01198"/>
    </source>
</evidence>
<evidence type="ECO:0000305" key="3"/>
<evidence type="ECO:0007829" key="4">
    <source>
        <dbReference type="PDB" id="6JD1"/>
    </source>
</evidence>
<evidence type="ECO:0007829" key="5">
    <source>
        <dbReference type="PDB" id="6KPA"/>
    </source>
</evidence>
<evidence type="ECO:0007829" key="6">
    <source>
        <dbReference type="PDB" id="6KPH"/>
    </source>
</evidence>
<evidence type="ECO:0007829" key="7">
    <source>
        <dbReference type="PDB" id="6KPJ"/>
    </source>
</evidence>
<evidence type="ECO:0007829" key="8">
    <source>
        <dbReference type="PDB" id="6KQK"/>
    </source>
</evidence>
<organism>
    <name type="scientific">Saccharolobus solfataricus (strain ATCC 35092 / DSM 1617 / JCM 11322 / P2)</name>
    <name type="common">Sulfolobus solfataricus</name>
    <dbReference type="NCBI Taxonomy" id="273057"/>
    <lineage>
        <taxon>Archaea</taxon>
        <taxon>Thermoproteota</taxon>
        <taxon>Thermoprotei</taxon>
        <taxon>Sulfolobales</taxon>
        <taxon>Sulfolobaceae</taxon>
        <taxon>Saccharolobus</taxon>
    </lineage>
</organism>
<name>ILVC2_SACS2</name>
<sequence>MDKTVLDANLDPLKGKTIGVIGYGNQGRVQATIMRENGLNVIVGNVKDKYYELAKKEGFEVYEIDEAVRRSDVALLLIPDEVMKEVYEKKIAPVLQGKKEFVLDFASGYNVAFGLIRPPKSVDTIMVAPRMVGEGIMDLHKQGKGYPVLLGVKQDASGKAWDYAKAIAKGIGAIPGGIAVISSFEEEALLDLMSEHTWVPILFGAIKACYDIAVKEYGVSPEAALLEFYASGELAEIARLIAEEGIFNQMVHHSTTSQYGTLTRMFKYYDVVRRIVENEAKYIWDGSFAKEWSLEQQAGYPVFYRLWELATQSEMAKAEKELYKLLGRKVKND</sequence>
<proteinExistence type="evidence at protein level"/>
<protein>
    <recommendedName>
        <fullName>Putative ketol-acid reductoisomerase 2</fullName>
        <ecNumber>1.1.1.86</ecNumber>
    </recommendedName>
    <alternativeName>
        <fullName>Acetohydroxy-acid isomeroreductase 2</fullName>
    </alternativeName>
    <alternativeName>
        <fullName>Alpha-keto-beta-hydroxylacyl reductoisomerase 2</fullName>
    </alternativeName>
</protein>
<dbReference type="EC" id="1.1.1.86"/>
<dbReference type="EMBL" id="AE006641">
    <property type="protein sequence ID" value="AAK41560.1"/>
    <property type="molecule type" value="Genomic_DNA"/>
</dbReference>
<dbReference type="PIR" id="A99288">
    <property type="entry name" value="A99288"/>
</dbReference>
<dbReference type="RefSeq" id="WP_010923317.1">
    <property type="nucleotide sequence ID" value="NC_002754.1"/>
</dbReference>
<dbReference type="PDB" id="6JCV">
    <property type="method" value="EM"/>
    <property type="resolution" value="2.92 A"/>
    <property type="chains" value="A/B/C/D/E/F/G/H/I/J/K/L=1-333"/>
</dbReference>
<dbReference type="PDB" id="6JCW">
    <property type="method" value="EM"/>
    <property type="resolution" value="3.04 A"/>
    <property type="chains" value="A/B/C/D/E/F/G/H/I/J/K/L=1-333"/>
</dbReference>
<dbReference type="PDB" id="6JCZ">
    <property type="method" value="EM"/>
    <property type="resolution" value="3.35 A"/>
    <property type="chains" value="A/B/C/D/E/F/G/H/I/J/K/L=1-333"/>
</dbReference>
<dbReference type="PDB" id="6JD1">
    <property type="method" value="EM"/>
    <property type="resolution" value="3.38 A"/>
    <property type="chains" value="A/B/C/D/E/F/G/H/I/J/K/L=1-333"/>
</dbReference>
<dbReference type="PDB" id="6JD2">
    <property type="method" value="X-ray"/>
    <property type="resolution" value="2.53 A"/>
    <property type="chains" value="A/B/C/D/E/F/G/H/I/J/K/L=1-333"/>
</dbReference>
<dbReference type="PDB" id="6KOU">
    <property type="method" value="EM"/>
    <property type="resolution" value="2.43 A"/>
    <property type="chains" value="A/B/C/D/E/F/G/H/I/J/K/L=1-333"/>
</dbReference>
<dbReference type="PDB" id="6KPA">
    <property type="method" value="EM"/>
    <property type="resolution" value="2.75 A"/>
    <property type="chains" value="A/B/C/D/E/F/G/H/I/J/K/L=1-333"/>
</dbReference>
<dbReference type="PDB" id="6KPE">
    <property type="method" value="EM"/>
    <property type="resolution" value="2.83 A"/>
    <property type="chains" value="A/B/C/D/E/F/G/H/I/J/K/L=1-333"/>
</dbReference>
<dbReference type="PDB" id="6KPH">
    <property type="method" value="EM"/>
    <property type="resolution" value="2.41 A"/>
    <property type="chains" value="A/B/C/D/E/F/G/H/I/J/K/L=1-333"/>
</dbReference>
<dbReference type="PDB" id="6KPI">
    <property type="method" value="EM"/>
    <property type="resolution" value="2.43 A"/>
    <property type="chains" value="A/B/C/D/E/F/G/H/I/J/K/L=1-333"/>
</dbReference>
<dbReference type="PDB" id="6KPJ">
    <property type="method" value="EM"/>
    <property type="resolution" value="2.56 A"/>
    <property type="chains" value="A/B/C/D/E/F/G/H/I/J/K/L=1-333"/>
</dbReference>
<dbReference type="PDB" id="6KPK">
    <property type="method" value="EM"/>
    <property type="resolution" value="2.30 A"/>
    <property type="chains" value="A/B/C/D/E/F/G/H/I/J/K/L=1-333"/>
</dbReference>
<dbReference type="PDB" id="6KQ4">
    <property type="method" value="EM"/>
    <property type="resolution" value="2.30 A"/>
    <property type="chains" value="A/B/C/D/E/F/G/H/I/J/K/L=1-333"/>
</dbReference>
<dbReference type="PDB" id="6KQ8">
    <property type="method" value="EM"/>
    <property type="resolution" value="3.00 A"/>
    <property type="chains" value="A/B/C/D/E/F/G/H/I/J/K/L=1-333"/>
</dbReference>
<dbReference type="PDB" id="6KQJ">
    <property type="method" value="EM"/>
    <property type="resolution" value="2.54 A"/>
    <property type="chains" value="A/B/C/D/E/F/G/H/I/J/K/L=1-333"/>
</dbReference>
<dbReference type="PDB" id="6KQK">
    <property type="method" value="EM"/>
    <property type="resolution" value="2.17 A"/>
    <property type="chains" value="A/B/C/D/E/F/G/H/I/J/K/L=1-333"/>
</dbReference>
<dbReference type="PDB" id="6KQO">
    <property type="method" value="EM"/>
    <property type="resolution" value="2.52 A"/>
    <property type="chains" value="A/B/C/D/E/F/G/H/I/J/K/L=1-333"/>
</dbReference>
<dbReference type="PDBsum" id="6JCV"/>
<dbReference type="PDBsum" id="6JCW"/>
<dbReference type="PDBsum" id="6JCZ"/>
<dbReference type="PDBsum" id="6JD1"/>
<dbReference type="PDBsum" id="6JD2"/>
<dbReference type="PDBsum" id="6KOU"/>
<dbReference type="PDBsum" id="6KPA"/>
<dbReference type="PDBsum" id="6KPE"/>
<dbReference type="PDBsum" id="6KPH"/>
<dbReference type="PDBsum" id="6KPI"/>
<dbReference type="PDBsum" id="6KPJ"/>
<dbReference type="PDBsum" id="6KPK"/>
<dbReference type="PDBsum" id="6KQ4"/>
<dbReference type="PDBsum" id="6KQ8"/>
<dbReference type="PDBsum" id="6KQJ"/>
<dbReference type="PDBsum" id="6KQK"/>
<dbReference type="PDBsum" id="6KQO"/>
<dbReference type="EMDB" id="EMD-9798"/>
<dbReference type="EMDB" id="EMD-9799"/>
<dbReference type="EMDB" id="EMD-9800"/>
<dbReference type="EMDB" id="EMD-9801"/>
<dbReference type="SMR" id="Q97YJ9"/>
<dbReference type="FunCoup" id="Q97YJ9">
    <property type="interactions" value="97"/>
</dbReference>
<dbReference type="STRING" id="273057.SSO1322"/>
<dbReference type="PaxDb" id="273057-SSO1322"/>
<dbReference type="EnsemblBacteria" id="AAK41560">
    <property type="protein sequence ID" value="AAK41560"/>
    <property type="gene ID" value="SSO1322"/>
</dbReference>
<dbReference type="GeneID" id="1454339"/>
<dbReference type="KEGG" id="sso:SSO1322"/>
<dbReference type="PATRIC" id="fig|273057.12.peg.1324"/>
<dbReference type="eggNOG" id="arCOG04465">
    <property type="taxonomic scope" value="Archaea"/>
</dbReference>
<dbReference type="HOGENOM" id="CLU_033821_0_1_2"/>
<dbReference type="InParanoid" id="Q97YJ9"/>
<dbReference type="PhylomeDB" id="Q97YJ9"/>
<dbReference type="UniPathway" id="UPA00047">
    <property type="reaction ID" value="UER00056"/>
</dbReference>
<dbReference type="UniPathway" id="UPA00049">
    <property type="reaction ID" value="UER00060"/>
</dbReference>
<dbReference type="Proteomes" id="UP000001974">
    <property type="component" value="Chromosome"/>
</dbReference>
<dbReference type="GO" id="GO:0004455">
    <property type="term" value="F:ketol-acid reductoisomerase activity"/>
    <property type="evidence" value="ECO:0000318"/>
    <property type="project" value="GO_Central"/>
</dbReference>
<dbReference type="GO" id="GO:0009097">
    <property type="term" value="P:isoleucine biosynthetic process"/>
    <property type="evidence" value="ECO:0000318"/>
    <property type="project" value="GO_Central"/>
</dbReference>
<dbReference type="GO" id="GO:0009099">
    <property type="term" value="P:L-valine biosynthetic process"/>
    <property type="evidence" value="ECO:0000318"/>
    <property type="project" value="GO_Central"/>
</dbReference>
<dbReference type="FunFam" id="3.40.50.720:FF:001099">
    <property type="entry name" value="Putative ketol-acid reductoisomerase 2"/>
    <property type="match status" value="1"/>
</dbReference>
<dbReference type="Gene3D" id="6.10.240.10">
    <property type="match status" value="1"/>
</dbReference>
<dbReference type="Gene3D" id="3.40.50.720">
    <property type="entry name" value="NAD(P)-binding Rossmann-like Domain"/>
    <property type="match status" value="1"/>
</dbReference>
<dbReference type="InterPro" id="IPR008927">
    <property type="entry name" value="6-PGluconate_DH-like_C_sf"/>
</dbReference>
<dbReference type="InterPro" id="IPR013023">
    <property type="entry name" value="KARI"/>
</dbReference>
<dbReference type="InterPro" id="IPR000506">
    <property type="entry name" value="KARI_C"/>
</dbReference>
<dbReference type="InterPro" id="IPR013116">
    <property type="entry name" value="KARI_N"/>
</dbReference>
<dbReference type="InterPro" id="IPR036291">
    <property type="entry name" value="NAD(P)-bd_dom_sf"/>
</dbReference>
<dbReference type="NCBIfam" id="TIGR00465">
    <property type="entry name" value="ilvC"/>
    <property type="match status" value="1"/>
</dbReference>
<dbReference type="PANTHER" id="PTHR21371">
    <property type="entry name" value="KETOL-ACID REDUCTOISOMERASE, MITOCHONDRIAL"/>
    <property type="match status" value="1"/>
</dbReference>
<dbReference type="PANTHER" id="PTHR21371:SF1">
    <property type="entry name" value="KETOL-ACID REDUCTOISOMERASE, MITOCHONDRIAL"/>
    <property type="match status" value="1"/>
</dbReference>
<dbReference type="Pfam" id="PF01450">
    <property type="entry name" value="KARI_C"/>
    <property type="match status" value="1"/>
</dbReference>
<dbReference type="Pfam" id="PF07991">
    <property type="entry name" value="KARI_N"/>
    <property type="match status" value="1"/>
</dbReference>
<dbReference type="SUPFAM" id="SSF48179">
    <property type="entry name" value="6-phosphogluconate dehydrogenase C-terminal domain-like"/>
    <property type="match status" value="1"/>
</dbReference>
<dbReference type="SUPFAM" id="SSF51735">
    <property type="entry name" value="NAD(P)-binding Rossmann-fold domains"/>
    <property type="match status" value="1"/>
</dbReference>
<dbReference type="PROSITE" id="PS51851">
    <property type="entry name" value="KARI_C"/>
    <property type="match status" value="1"/>
</dbReference>
<dbReference type="PROSITE" id="PS51850">
    <property type="entry name" value="KARI_N"/>
    <property type="match status" value="1"/>
</dbReference>
<accession>Q97YJ9</accession>
<keyword id="KW-0002">3D-structure</keyword>
<keyword id="KW-0028">Amino-acid biosynthesis</keyword>
<keyword id="KW-0100">Branched-chain amino acid biosynthesis</keyword>
<keyword id="KW-0521">NADP</keyword>
<keyword id="KW-0560">Oxidoreductase</keyword>
<keyword id="KW-1185">Reference proteome</keyword>